<keyword id="KW-0002">3D-structure</keyword>
<keyword id="KW-0175">Coiled coil</keyword>
<keyword id="KW-0963">Cytoplasm</keyword>
<keyword id="KW-0967">Endosome</keyword>
<keyword id="KW-0472">Membrane</keyword>
<keyword id="KW-0653">Protein transport</keyword>
<keyword id="KW-1185">Reference proteome</keyword>
<keyword id="KW-0813">Transport</keyword>
<name>DID4_YEAST</name>
<comment type="function">
    <text evidence="3 4 7">Required for the sorting and concentration of proteins resulting in the entry of these proteins into the invaginating vesicles of the multivesicular body (MVB). Acts a component of the ESCRT-III complex, which appears to be critical for late steps in MVB sorting, such as membrane invagination and final cargo sorting and recruitment of late-acting components of the sorting machinery. The MVB pathway requires the sequential function of ESCRT-O, -I,-II and -III complex assemblies. Can directly stimulate VPS4 ATPase activity. The DID4/VPS2-VPS24 subcomplex is required for the VPS4-dependent dissociation of ESCRT-III.</text>
</comment>
<comment type="subunit">
    <text evidence="4 5">Core component of the ESCRT-III complex (endosomal sorting required for transport complex III). ESCRT-III appears to be sequentially assembled as a flat lattice on the endosome membrane and forms a transient 450 kDa complex that contains DID4, oligomerized SNF7, VPS20 and VPS24. SNF7 oligomerization into a membrane-associated filament is nucleated by association of SNF7 with VPS20; the process is terminated through association of VPS24, possibly by capping the SNF7 filament. VPS24 subsequently associates with DID4/VPS2.</text>
</comment>
<comment type="interaction">
    <interactant intactId="EBI-26574">
        <id>P36108</id>
    </interactant>
    <interactant intactId="EBI-17554">
        <id>P39929</id>
        <label>SNF7</label>
    </interactant>
    <organismsDiffer>false</organismsDiffer>
    <experiments>5</experiments>
</comment>
<comment type="interaction">
    <interactant intactId="EBI-26574">
        <id>P36108</id>
    </interactant>
    <interactant intactId="EBI-20475">
        <id>P52917</id>
        <label>VPS4</label>
    </interactant>
    <organismsDiffer>false</organismsDiffer>
    <experiments>4</experiments>
</comment>
<comment type="subcellular location">
    <subcellularLocation>
        <location evidence="4">Cytoplasm</location>
    </subcellularLocation>
    <subcellularLocation>
        <location evidence="4">Endosome membrane</location>
        <topology evidence="4">Peripheral membrane protein</topology>
    </subcellularLocation>
</comment>
<comment type="similarity">
    <text evidence="8">Belongs to the SNF7 family.</text>
</comment>
<comment type="sequence caution" evidence="8">
    <conflict type="erroneous gene model prediction">
        <sequence resource="EMBL-CDS" id="CAA81834"/>
    </conflict>
</comment>
<reference key="1">
    <citation type="journal article" date="1994" name="Nature">
        <title>Complete DNA sequence of yeast chromosome XI.</title>
        <authorList>
            <person name="Dujon B."/>
            <person name="Alexandraki D."/>
            <person name="Andre B."/>
            <person name="Ansorge W."/>
            <person name="Baladron V."/>
            <person name="Ballesta J.P.G."/>
            <person name="Banrevi A."/>
            <person name="Bolle P.-A."/>
            <person name="Bolotin-Fukuhara M."/>
            <person name="Bossier P."/>
            <person name="Bou G."/>
            <person name="Boyer J."/>
            <person name="Buitrago M.J."/>
            <person name="Cheret G."/>
            <person name="Colleaux L."/>
            <person name="Daignan-Fornier B."/>
            <person name="del Rey F."/>
            <person name="Dion C."/>
            <person name="Domdey H."/>
            <person name="Duesterhoeft A."/>
            <person name="Duesterhus S."/>
            <person name="Entian K.-D."/>
            <person name="Erfle H."/>
            <person name="Esteban P.F."/>
            <person name="Feldmann H."/>
            <person name="Fernandes L."/>
            <person name="Fobo G.M."/>
            <person name="Fritz C."/>
            <person name="Fukuhara H."/>
            <person name="Gabel C."/>
            <person name="Gaillon L."/>
            <person name="Garcia-Cantalejo J.M."/>
            <person name="Garcia-Ramirez J.J."/>
            <person name="Gent M.E."/>
            <person name="Ghazvini M."/>
            <person name="Goffeau A."/>
            <person name="Gonzalez A."/>
            <person name="Grothues D."/>
            <person name="Guerreiro P."/>
            <person name="Hegemann J.H."/>
            <person name="Hewitt N."/>
            <person name="Hilger F."/>
            <person name="Hollenberg C.P."/>
            <person name="Horaitis O."/>
            <person name="Indge K.J."/>
            <person name="Jacquier A."/>
            <person name="James C.M."/>
            <person name="Jauniaux J.-C."/>
            <person name="Jimenez A."/>
            <person name="Keuchel H."/>
            <person name="Kirchrath L."/>
            <person name="Kleine K."/>
            <person name="Koetter P."/>
            <person name="Legrain P."/>
            <person name="Liebl S."/>
            <person name="Louis E.J."/>
            <person name="Maia e Silva A."/>
            <person name="Marck C."/>
            <person name="Monnier A.-L."/>
            <person name="Moestl D."/>
            <person name="Mueller S."/>
            <person name="Obermaier B."/>
            <person name="Oliver S.G."/>
            <person name="Pallier C."/>
            <person name="Pascolo S."/>
            <person name="Pfeiffer F."/>
            <person name="Philippsen P."/>
            <person name="Planta R.J."/>
            <person name="Pohl F.M."/>
            <person name="Pohl T.M."/>
            <person name="Poehlmann R."/>
            <person name="Portetelle D."/>
            <person name="Purnelle B."/>
            <person name="Puzos V."/>
            <person name="Ramezani Rad M."/>
            <person name="Rasmussen S.W."/>
            <person name="Remacha M.A."/>
            <person name="Revuelta J.L."/>
            <person name="Richard G.-F."/>
            <person name="Rieger M."/>
            <person name="Rodrigues-Pousada C."/>
            <person name="Rose M."/>
            <person name="Rupp T."/>
            <person name="Santos M.A."/>
            <person name="Schwager C."/>
            <person name="Sensen C."/>
            <person name="Skala J."/>
            <person name="Soares H."/>
            <person name="Sor F."/>
            <person name="Stegemann J."/>
            <person name="Tettelin H."/>
            <person name="Thierry A."/>
            <person name="Tzermia M."/>
            <person name="Urrestarazu L.A."/>
            <person name="van Dyck L."/>
            <person name="van Vliet-Reedijk J.C."/>
            <person name="Valens M."/>
            <person name="Vandenbol M."/>
            <person name="Vilela C."/>
            <person name="Vissers S."/>
            <person name="von Wettstein D."/>
            <person name="Voss H."/>
            <person name="Wiemann S."/>
            <person name="Xu G."/>
            <person name="Zimmermann J."/>
            <person name="Haasemann M."/>
            <person name="Becker I."/>
            <person name="Mewes H.-W."/>
        </authorList>
    </citation>
    <scope>NUCLEOTIDE SEQUENCE [LARGE SCALE GENOMIC DNA]</scope>
    <source>
        <strain>ATCC 204508 / S288c</strain>
    </source>
</reference>
<reference key="2">
    <citation type="journal article" date="2014" name="G3 (Bethesda)">
        <title>The reference genome sequence of Saccharomyces cerevisiae: Then and now.</title>
        <authorList>
            <person name="Engel S.R."/>
            <person name="Dietrich F.S."/>
            <person name="Fisk D.G."/>
            <person name="Binkley G."/>
            <person name="Balakrishnan R."/>
            <person name="Costanzo M.C."/>
            <person name="Dwight S.S."/>
            <person name="Hitz B.C."/>
            <person name="Karra K."/>
            <person name="Nash R.S."/>
            <person name="Weng S."/>
            <person name="Wong E.D."/>
            <person name="Lloyd P."/>
            <person name="Skrzypek M.S."/>
            <person name="Miyasato S.R."/>
            <person name="Simison M."/>
            <person name="Cherry J.M."/>
        </authorList>
    </citation>
    <scope>GENOME REANNOTATION</scope>
    <source>
        <strain>ATCC 204508 / S288c</strain>
    </source>
</reference>
<reference key="3">
    <citation type="journal article" date="2000" name="Nucleic Acids Res.">
        <title>Test of intron predictions reveals novel splice sites, alternatively spliced mRNAs and new introns in meiotically regulated genes of yeast.</title>
        <authorList>
            <person name="Davis C.A."/>
            <person name="Grate L."/>
            <person name="Spingola M."/>
            <person name="Ares M. Jr."/>
        </authorList>
    </citation>
    <scope>IDENTIFICATION OF INTRON</scope>
</reference>
<reference key="4">
    <citation type="journal article" date="2001" name="J. Cell Sci.">
        <title>CHMP1 functions as a member of a newly defined family of vesicle trafficking proteins.</title>
        <authorList>
            <person name="Howard T.L."/>
            <person name="Stauffer D.R."/>
            <person name="Degnin C.R."/>
            <person name="Hollenberg S.M."/>
        </authorList>
    </citation>
    <scope>FUNCTION</scope>
</reference>
<reference key="5">
    <citation type="journal article" date="2002" name="Dev. Cell">
        <title>Escrt-III: an endosome-associated heterooligomeric protein complex required for mvb sorting.</title>
        <authorList>
            <person name="Babst M."/>
            <person name="Katzmann D.J."/>
            <person name="Estepa-Sabal E.J."/>
            <person name="Meerloo T."/>
            <person name="Emr S.D."/>
        </authorList>
    </citation>
    <scope>FUNCTION</scope>
    <scope>IDENTIFICATION IN THE ESCRT-III COMPLEX</scope>
    <scope>INTERACTION WITH VPS24</scope>
    <scope>SUBCELLULAR LOCATION</scope>
</reference>
<reference key="6">
    <citation type="journal article" date="2007" name="J. Mol. Biol.">
        <title>Structural characterization of the ATPase reaction cycle of endosomal AAA protein Vps4.</title>
        <authorList>
            <person name="Xiao J."/>
            <person name="Xia H."/>
            <person name="Yoshino-Koh K."/>
            <person name="Zhou J."/>
            <person name="Xu Z."/>
        </authorList>
    </citation>
    <scope>INTERACTION WITH VPS4</scope>
</reference>
<reference key="7">
    <citation type="journal article" date="2008" name="Dev. Cell">
        <title>ESCRT-III family members stimulate Vps4 ATPase activity directly or via Vta1.</title>
        <authorList>
            <person name="Azmi I.F."/>
            <person name="Davies B.A."/>
            <person name="Xiao J."/>
            <person name="Babst M."/>
            <person name="Xu Z."/>
            <person name="Katzmann D.J."/>
        </authorList>
    </citation>
    <scope>FUNCTION</scope>
</reference>
<reference key="8">
    <citation type="journal article" date="2008" name="Dev. Cell">
        <title>Ordered assembly of the ESCRT-III complex on endosomes is required to sequester cargo during MVB formation.</title>
        <authorList>
            <person name="Teis D."/>
            <person name="Saksena S."/>
            <person name="Emr S.D."/>
        </authorList>
    </citation>
    <scope>ASSEMBLY OF THE ESCRT-III COMPLEX</scope>
</reference>
<reference key="9">
    <citation type="journal article" date="2008" name="Mol. Cell. Proteomics">
        <title>A multidimensional chromatography technology for in-depth phosphoproteome analysis.</title>
        <authorList>
            <person name="Albuquerque C.P."/>
            <person name="Smolka M.B."/>
            <person name="Payne S.H."/>
            <person name="Bafna V."/>
            <person name="Eng J."/>
            <person name="Zhou H."/>
        </authorList>
    </citation>
    <scope>IDENTIFICATION BY MASS SPECTROMETRY [LARGE SCALE ANALYSIS]</scope>
</reference>
<reference key="10">
    <citation type="journal article" date="2012" name="Proc. Natl. Acad. Sci. U.S.A.">
        <title>N-terminal acetylome analyses and functional insights of the N-terminal acetyltransferase NatB.</title>
        <authorList>
            <person name="Van Damme P."/>
            <person name="Lasa M."/>
            <person name="Polevoda B."/>
            <person name="Gazquez C."/>
            <person name="Elosegui-Artola A."/>
            <person name="Kim D.S."/>
            <person name="De Juan-Pardo E."/>
            <person name="Demeyer K."/>
            <person name="Hole K."/>
            <person name="Larrea E."/>
            <person name="Timmerman E."/>
            <person name="Prieto J."/>
            <person name="Arnesen T."/>
            <person name="Sherman F."/>
            <person name="Gevaert K."/>
            <person name="Aldabe R."/>
        </authorList>
    </citation>
    <scope>IDENTIFICATION BY MASS SPECTROMETRY [LARGE SCALE ANALYSIS]</scope>
</reference>
<reference key="11">
    <citation type="journal article" date="2007" name="Nature">
        <title>Structural basis for selective recognition of ESCRT-III by the AAA ATPase Vps4.</title>
        <authorList>
            <person name="Obita T."/>
            <person name="Saksena S."/>
            <person name="Ghazi-Tabatabai S."/>
            <person name="Gill D.J."/>
            <person name="Perisic O."/>
            <person name="Emr S.D."/>
            <person name="Williams R.L."/>
        </authorList>
    </citation>
    <scope>X-RAY CRYSTALLOGRAPHY (1.98 ANGSTROMS) OF 183-232 IN COMPLEX WITH VPS4</scope>
    <scope>MUTAGENESIS OF LEU-221; ARG-224; LEU-225; LEU-228 AND LYS-229</scope>
</reference>
<sequence>MSLFEWVFGKNVTPQERLKKNQRALERTQRELEREKRKLELQDKKLVSEIKKSAKNGQVAAAKVQAKDLVRTRNYIQKFDNMKAQLQAISLRIQAVRSSDQMTRSMSEATGLLAGMNRTMNLPQLQRISMEFEKQSDLMGQRQEFMDEAIDNVMGDEVDEDEEADEIVNKVLDEIGVDLNSQLQSTPQNLVSNAPIAETAMGIPEPIGAGSEFHGNPDDDLQARLNTLKKQT</sequence>
<feature type="chain" id="PRO_0000211477" description="DOA4-independent degradation protein 4">
    <location>
        <begin position="1"/>
        <end position="232"/>
    </location>
</feature>
<feature type="region of interest" description="Interaction with VPS4" evidence="6">
    <location>
        <begin position="183"/>
        <end position="232"/>
    </location>
</feature>
<feature type="region of interest" description="Disordered" evidence="2">
    <location>
        <begin position="203"/>
        <end position="232"/>
    </location>
</feature>
<feature type="coiled-coil region" evidence="1">
    <location>
        <begin position="14"/>
        <end position="97"/>
    </location>
</feature>
<feature type="short sequence motif" description="MIT-interacting motif">
    <location>
        <begin position="219"/>
        <end position="229"/>
    </location>
</feature>
<feature type="mutagenesis site" description="Abolishes interaction with VPS4." evidence="5">
    <original>L</original>
    <variation>D</variation>
    <location>
        <position position="221"/>
    </location>
</feature>
<feature type="mutagenesis site" description="Abolishes interaction with VPS4. Impairs sorting." evidence="5">
    <original>R</original>
    <variation>D</variation>
    <location>
        <position position="224"/>
    </location>
</feature>
<feature type="mutagenesis site" description="Abolishes interaction with VPS4." evidence="5">
    <original>L</original>
    <variation>D</variation>
    <location>
        <position position="225"/>
    </location>
</feature>
<feature type="mutagenesis site" description="Greatly impairs sorting.">
    <original>LK</original>
    <variation>DD</variation>
    <location>
        <begin position="228"/>
        <end position="229"/>
    </location>
</feature>
<feature type="mutagenesis site" description="Abolishes interaction with VPS4." evidence="5">
    <original>L</original>
    <variation>D</variation>
    <location>
        <position position="228"/>
    </location>
</feature>
<feature type="mutagenesis site" description="Abolishes interaction with VPS4." evidence="5">
    <original>K</original>
    <variation>D</variation>
    <location>
        <position position="229"/>
    </location>
</feature>
<feature type="helix" evidence="9">
    <location>
        <begin position="188"/>
        <end position="191"/>
    </location>
</feature>
<feature type="helix" evidence="9">
    <location>
        <begin position="197"/>
        <end position="200"/>
    </location>
</feature>
<feature type="strand" evidence="9">
    <location>
        <begin position="201"/>
        <end position="204"/>
    </location>
</feature>
<feature type="helix" evidence="9">
    <location>
        <begin position="219"/>
        <end position="229"/>
    </location>
</feature>
<dbReference type="EMBL" id="Z28002">
    <property type="protein sequence ID" value="CAA81834.1"/>
    <property type="status" value="ALT_SEQ"/>
    <property type="molecule type" value="Genomic_DNA"/>
</dbReference>
<dbReference type="EMBL" id="BK006944">
    <property type="protein sequence ID" value="DAA09155.1"/>
    <property type="molecule type" value="Genomic_DNA"/>
</dbReference>
<dbReference type="PIR" id="S37812">
    <property type="entry name" value="S37812"/>
</dbReference>
<dbReference type="RefSeq" id="NP_012924.2">
    <property type="nucleotide sequence ID" value="NM_001179568.1"/>
</dbReference>
<dbReference type="PDB" id="2V6X">
    <property type="method" value="X-ray"/>
    <property type="resolution" value="1.98 A"/>
    <property type="chains" value="B=183-232"/>
</dbReference>
<dbReference type="PDB" id="6AP1">
    <property type="method" value="EM"/>
    <property type="resolution" value="3.20 A"/>
    <property type="chains" value="G=165-172"/>
</dbReference>
<dbReference type="PDB" id="6BMF">
    <property type="method" value="EM"/>
    <property type="resolution" value="3.20 A"/>
    <property type="chains" value="G=165-172"/>
</dbReference>
<dbReference type="PDBsum" id="2V6X"/>
<dbReference type="PDBsum" id="6AP1"/>
<dbReference type="PDBsum" id="6BMF"/>
<dbReference type="SMR" id="P36108"/>
<dbReference type="BioGRID" id="34131">
    <property type="interactions" value="238"/>
</dbReference>
<dbReference type="ComplexPortal" id="CPX-1624">
    <property type="entry name" value="ESCRT-III complex"/>
</dbReference>
<dbReference type="DIP" id="DIP-1916N"/>
<dbReference type="FunCoup" id="P36108">
    <property type="interactions" value="893"/>
</dbReference>
<dbReference type="IntAct" id="P36108">
    <property type="interactions" value="17"/>
</dbReference>
<dbReference type="MINT" id="P36108"/>
<dbReference type="STRING" id="4932.YKL002W"/>
<dbReference type="TCDB" id="3.A.31.1.1">
    <property type="family name" value="the endosomal sorting complexes required for transport iii (escrt-iii) family"/>
</dbReference>
<dbReference type="iPTMnet" id="P36108"/>
<dbReference type="PaxDb" id="4932-YKL002W"/>
<dbReference type="PeptideAtlas" id="P36108"/>
<dbReference type="DNASU" id="853868"/>
<dbReference type="EnsemblFungi" id="YKL002W_mRNA">
    <property type="protein sequence ID" value="YKL002W"/>
    <property type="gene ID" value="YKL002W"/>
</dbReference>
<dbReference type="GeneID" id="853868"/>
<dbReference type="KEGG" id="sce:YKL002W"/>
<dbReference type="AGR" id="SGD:S000001485"/>
<dbReference type="SGD" id="S000001485">
    <property type="gene designation" value="DID4"/>
</dbReference>
<dbReference type="VEuPathDB" id="FungiDB:YKL002W"/>
<dbReference type="eggNOG" id="KOG3230">
    <property type="taxonomic scope" value="Eukaryota"/>
</dbReference>
<dbReference type="GeneTree" id="ENSGT00950000182832"/>
<dbReference type="HOGENOM" id="CLU_069208_1_0_1"/>
<dbReference type="InParanoid" id="P36108"/>
<dbReference type="OMA" id="KMAKMNQ"/>
<dbReference type="OrthoDB" id="10252926at2759"/>
<dbReference type="BioCyc" id="YEAST:G3O-31813-MONOMER"/>
<dbReference type="Reactome" id="R-SCE-1632852">
    <property type="pathway name" value="Macroautophagy"/>
</dbReference>
<dbReference type="Reactome" id="R-SCE-917729">
    <property type="pathway name" value="Endosomal Sorting Complex Required For Transport (ESCRT)"/>
</dbReference>
<dbReference type="Reactome" id="R-SCE-9668328">
    <property type="pathway name" value="Sealing of the nuclear envelope (NE) by ESCRT-III"/>
</dbReference>
<dbReference type="BioGRID-ORCS" id="853868">
    <property type="hits" value="5 hits in 10 CRISPR screens"/>
</dbReference>
<dbReference type="EvolutionaryTrace" id="P36108"/>
<dbReference type="PRO" id="PR:P36108"/>
<dbReference type="Proteomes" id="UP000002311">
    <property type="component" value="Chromosome XI"/>
</dbReference>
<dbReference type="RNAct" id="P36108">
    <property type="molecule type" value="protein"/>
</dbReference>
<dbReference type="GO" id="GO:0005737">
    <property type="term" value="C:cytoplasm"/>
    <property type="evidence" value="ECO:0000314"/>
    <property type="project" value="SGD"/>
</dbReference>
<dbReference type="GO" id="GO:0000815">
    <property type="term" value="C:ESCRT III complex"/>
    <property type="evidence" value="ECO:0000314"/>
    <property type="project" value="SGD"/>
</dbReference>
<dbReference type="GO" id="GO:0005771">
    <property type="term" value="C:multivesicular body"/>
    <property type="evidence" value="ECO:0000318"/>
    <property type="project" value="GO_Central"/>
</dbReference>
<dbReference type="GO" id="GO:1904669">
    <property type="term" value="P:ATP export"/>
    <property type="evidence" value="ECO:0000315"/>
    <property type="project" value="SGD"/>
</dbReference>
<dbReference type="GO" id="GO:0032509">
    <property type="term" value="P:endosome transport via multivesicular body sorting pathway"/>
    <property type="evidence" value="ECO:0000318"/>
    <property type="project" value="GO_Central"/>
</dbReference>
<dbReference type="GO" id="GO:0070676">
    <property type="term" value="P:intralumenal vesicle formation"/>
    <property type="evidence" value="ECO:0000315"/>
    <property type="project" value="SGD"/>
</dbReference>
<dbReference type="GO" id="GO:0045324">
    <property type="term" value="P:late endosome to vacuole transport"/>
    <property type="evidence" value="ECO:0000314"/>
    <property type="project" value="SGD"/>
</dbReference>
<dbReference type="GO" id="GO:0045053">
    <property type="term" value="P:protein retention in Golgi apparatus"/>
    <property type="evidence" value="ECO:0000315"/>
    <property type="project" value="SGD"/>
</dbReference>
<dbReference type="GO" id="GO:0015031">
    <property type="term" value="P:protein transport"/>
    <property type="evidence" value="ECO:0000318"/>
    <property type="project" value="GO_Central"/>
</dbReference>
<dbReference type="GO" id="GO:0043162">
    <property type="term" value="P:ubiquitin-dependent protein catabolic process via the multivesicular body sorting pathway"/>
    <property type="evidence" value="ECO:0000314"/>
    <property type="project" value="ComplexPortal"/>
</dbReference>
<dbReference type="Gene3D" id="6.10.140.1230">
    <property type="match status" value="1"/>
</dbReference>
<dbReference type="InterPro" id="IPR005024">
    <property type="entry name" value="Snf7_fam"/>
</dbReference>
<dbReference type="PANTHER" id="PTHR10476">
    <property type="entry name" value="CHARGED MULTIVESICULAR BODY PROTEIN"/>
    <property type="match status" value="1"/>
</dbReference>
<dbReference type="Pfam" id="PF03357">
    <property type="entry name" value="Snf7"/>
    <property type="match status" value="1"/>
</dbReference>
<proteinExistence type="evidence at protein level"/>
<protein>
    <recommendedName>
        <fullName>DOA4-independent degradation protein 4</fullName>
    </recommendedName>
    <alternativeName>
        <fullName>ESCRT-III complex subunit VPS2</fullName>
    </alternativeName>
    <alternativeName>
        <fullName>Vacuolar protein-sorting-associated protein 2</fullName>
    </alternativeName>
    <alternativeName>
        <fullName>Vacuolar protein-targeting protein 14</fullName>
    </alternativeName>
</protein>
<accession>P36108</accession>
<accession>D6VXT5</accession>
<evidence type="ECO:0000255" key="1"/>
<evidence type="ECO:0000256" key="2">
    <source>
        <dbReference type="SAM" id="MobiDB-lite"/>
    </source>
</evidence>
<evidence type="ECO:0000269" key="3">
    <source>
    </source>
</evidence>
<evidence type="ECO:0000269" key="4">
    <source>
    </source>
</evidence>
<evidence type="ECO:0000269" key="5">
    <source>
    </source>
</evidence>
<evidence type="ECO:0000269" key="6">
    <source>
    </source>
</evidence>
<evidence type="ECO:0000269" key="7">
    <source>
    </source>
</evidence>
<evidence type="ECO:0000305" key="8"/>
<evidence type="ECO:0007829" key="9">
    <source>
        <dbReference type="PDB" id="2V6X"/>
    </source>
</evidence>
<gene>
    <name type="primary">DID4</name>
    <name type="synonym">CHM2</name>
    <name type="synonym">GRD7</name>
    <name type="synonym">REN1</name>
    <name type="synonym">VPL2</name>
    <name type="synonym">VPS2</name>
    <name type="synonym">VPT14</name>
    <name type="ordered locus">YKL002W</name>
</gene>
<organism>
    <name type="scientific">Saccharomyces cerevisiae (strain ATCC 204508 / S288c)</name>
    <name type="common">Baker's yeast</name>
    <dbReference type="NCBI Taxonomy" id="559292"/>
    <lineage>
        <taxon>Eukaryota</taxon>
        <taxon>Fungi</taxon>
        <taxon>Dikarya</taxon>
        <taxon>Ascomycota</taxon>
        <taxon>Saccharomycotina</taxon>
        <taxon>Saccharomycetes</taxon>
        <taxon>Saccharomycetales</taxon>
        <taxon>Saccharomycetaceae</taxon>
        <taxon>Saccharomyces</taxon>
    </lineage>
</organism>